<evidence type="ECO:0000255" key="1">
    <source>
        <dbReference type="HAMAP-Rule" id="MF_00739"/>
    </source>
</evidence>
<feature type="chain" id="PRO_0000234207" description="Urease subunit gamma">
    <location>
        <begin position="1"/>
        <end position="100"/>
    </location>
</feature>
<gene>
    <name evidence="1" type="primary">ureA</name>
    <name type="ordered locus">Nmul_A1239</name>
</gene>
<reference key="1">
    <citation type="submission" date="2005-08" db="EMBL/GenBank/DDBJ databases">
        <title>Complete sequence of chromosome 1 of Nitrosospira multiformis ATCC 25196.</title>
        <authorList>
            <person name="Copeland A."/>
            <person name="Lucas S."/>
            <person name="Lapidus A."/>
            <person name="Barry K."/>
            <person name="Detter J.C."/>
            <person name="Glavina T."/>
            <person name="Hammon N."/>
            <person name="Israni S."/>
            <person name="Pitluck S."/>
            <person name="Chain P."/>
            <person name="Malfatti S."/>
            <person name="Shin M."/>
            <person name="Vergez L."/>
            <person name="Schmutz J."/>
            <person name="Larimer F."/>
            <person name="Land M."/>
            <person name="Hauser L."/>
            <person name="Kyrpides N."/>
            <person name="Lykidis A."/>
            <person name="Richardson P."/>
        </authorList>
    </citation>
    <scope>NUCLEOTIDE SEQUENCE [LARGE SCALE GENOMIC DNA]</scope>
    <source>
        <strain>ATCC 25196 / NCIMB 11849 / C 71</strain>
    </source>
</reference>
<proteinExistence type="inferred from homology"/>
<organism>
    <name type="scientific">Nitrosospira multiformis (strain ATCC 25196 / NCIMB 11849 / C 71)</name>
    <dbReference type="NCBI Taxonomy" id="323848"/>
    <lineage>
        <taxon>Bacteria</taxon>
        <taxon>Pseudomonadati</taxon>
        <taxon>Pseudomonadota</taxon>
        <taxon>Betaproteobacteria</taxon>
        <taxon>Nitrosomonadales</taxon>
        <taxon>Nitrosomonadaceae</taxon>
        <taxon>Nitrosospira</taxon>
    </lineage>
</organism>
<keyword id="KW-0963">Cytoplasm</keyword>
<keyword id="KW-0378">Hydrolase</keyword>
<keyword id="KW-1185">Reference proteome</keyword>
<protein>
    <recommendedName>
        <fullName evidence="1">Urease subunit gamma</fullName>
        <ecNumber evidence="1">3.5.1.5</ecNumber>
    </recommendedName>
    <alternativeName>
        <fullName evidence="1">Urea amidohydrolase subunit gamma</fullName>
    </alternativeName>
</protein>
<sequence length="100" mass="10987">MDLTPREKDKLQIFTAGLLAERRKARGLRLNYPEAVALITCAILEGARDGNTVAELMSEGRKVLTRADVMEGVPEMIPDIQVEATFPDGTKLVTVHNPIV</sequence>
<name>URE3_NITMU</name>
<dbReference type="EC" id="3.5.1.5" evidence="1"/>
<dbReference type="EMBL" id="CP000103">
    <property type="protein sequence ID" value="ABB74542.1"/>
    <property type="molecule type" value="Genomic_DNA"/>
</dbReference>
<dbReference type="RefSeq" id="WP_011380583.1">
    <property type="nucleotide sequence ID" value="NC_007614.1"/>
</dbReference>
<dbReference type="SMR" id="Q2Y9M9"/>
<dbReference type="STRING" id="323848.Nmul_A1239"/>
<dbReference type="KEGG" id="nmu:Nmul_A1239"/>
<dbReference type="eggNOG" id="COG0831">
    <property type="taxonomic scope" value="Bacteria"/>
</dbReference>
<dbReference type="HOGENOM" id="CLU_145825_1_0_4"/>
<dbReference type="OrthoDB" id="9797217at2"/>
<dbReference type="UniPathway" id="UPA00258">
    <property type="reaction ID" value="UER00370"/>
</dbReference>
<dbReference type="Proteomes" id="UP000002718">
    <property type="component" value="Chromosome"/>
</dbReference>
<dbReference type="GO" id="GO:0005737">
    <property type="term" value="C:cytoplasm"/>
    <property type="evidence" value="ECO:0007669"/>
    <property type="project" value="UniProtKB-SubCell"/>
</dbReference>
<dbReference type="GO" id="GO:0016151">
    <property type="term" value="F:nickel cation binding"/>
    <property type="evidence" value="ECO:0007669"/>
    <property type="project" value="InterPro"/>
</dbReference>
<dbReference type="GO" id="GO:0009039">
    <property type="term" value="F:urease activity"/>
    <property type="evidence" value="ECO:0007669"/>
    <property type="project" value="UniProtKB-UniRule"/>
</dbReference>
<dbReference type="GO" id="GO:0043419">
    <property type="term" value="P:urea catabolic process"/>
    <property type="evidence" value="ECO:0007669"/>
    <property type="project" value="UniProtKB-UniRule"/>
</dbReference>
<dbReference type="CDD" id="cd00390">
    <property type="entry name" value="Urease_gamma"/>
    <property type="match status" value="1"/>
</dbReference>
<dbReference type="Gene3D" id="3.30.280.10">
    <property type="entry name" value="Urease, gamma-like subunit"/>
    <property type="match status" value="1"/>
</dbReference>
<dbReference type="HAMAP" id="MF_00739">
    <property type="entry name" value="Urease_gamma"/>
    <property type="match status" value="1"/>
</dbReference>
<dbReference type="InterPro" id="IPR012010">
    <property type="entry name" value="Urease_gamma"/>
</dbReference>
<dbReference type="InterPro" id="IPR002026">
    <property type="entry name" value="Urease_gamma/gamma-beta_su"/>
</dbReference>
<dbReference type="InterPro" id="IPR036463">
    <property type="entry name" value="Urease_gamma_sf"/>
</dbReference>
<dbReference type="InterPro" id="IPR050069">
    <property type="entry name" value="Urease_subunit"/>
</dbReference>
<dbReference type="NCBIfam" id="NF009712">
    <property type="entry name" value="PRK13241.1"/>
    <property type="match status" value="1"/>
</dbReference>
<dbReference type="NCBIfam" id="TIGR00193">
    <property type="entry name" value="urease_gam"/>
    <property type="match status" value="1"/>
</dbReference>
<dbReference type="PANTHER" id="PTHR33569">
    <property type="entry name" value="UREASE"/>
    <property type="match status" value="1"/>
</dbReference>
<dbReference type="PANTHER" id="PTHR33569:SF1">
    <property type="entry name" value="UREASE"/>
    <property type="match status" value="1"/>
</dbReference>
<dbReference type="Pfam" id="PF00547">
    <property type="entry name" value="Urease_gamma"/>
    <property type="match status" value="1"/>
</dbReference>
<dbReference type="PIRSF" id="PIRSF001223">
    <property type="entry name" value="Urease_gamma"/>
    <property type="match status" value="1"/>
</dbReference>
<dbReference type="SUPFAM" id="SSF54111">
    <property type="entry name" value="Urease, gamma-subunit"/>
    <property type="match status" value="1"/>
</dbReference>
<accession>Q2Y9M9</accession>
<comment type="catalytic activity">
    <reaction evidence="1">
        <text>urea + 2 H2O + H(+) = hydrogencarbonate + 2 NH4(+)</text>
        <dbReference type="Rhea" id="RHEA:20557"/>
        <dbReference type="ChEBI" id="CHEBI:15377"/>
        <dbReference type="ChEBI" id="CHEBI:15378"/>
        <dbReference type="ChEBI" id="CHEBI:16199"/>
        <dbReference type="ChEBI" id="CHEBI:17544"/>
        <dbReference type="ChEBI" id="CHEBI:28938"/>
        <dbReference type="EC" id="3.5.1.5"/>
    </reaction>
</comment>
<comment type="pathway">
    <text evidence="1">Nitrogen metabolism; urea degradation; CO(2) and NH(3) from urea (urease route): step 1/1.</text>
</comment>
<comment type="subunit">
    <text evidence="1">Heterotrimer of UreA (gamma), UreB (beta) and UreC (alpha) subunits. Three heterotrimers associate to form the active enzyme.</text>
</comment>
<comment type="subcellular location">
    <subcellularLocation>
        <location evidence="1">Cytoplasm</location>
    </subcellularLocation>
</comment>
<comment type="similarity">
    <text evidence="1">Belongs to the urease gamma subunit family.</text>
</comment>